<dbReference type="EC" id="3.4.24.-"/>
<dbReference type="EMBL" id="AAFI02000109">
    <property type="protein sequence ID" value="EAL63340.1"/>
    <property type="molecule type" value="Genomic_DNA"/>
</dbReference>
<dbReference type="RefSeq" id="XP_636850.1">
    <property type="nucleotide sequence ID" value="XM_631758.1"/>
</dbReference>
<dbReference type="SMR" id="Q54J86"/>
<dbReference type="FunCoup" id="Q54J86">
    <property type="interactions" value="4"/>
</dbReference>
<dbReference type="PaxDb" id="44689-DDB0252867"/>
<dbReference type="EnsemblProtists" id="EAL63340">
    <property type="protein sequence ID" value="EAL63340"/>
    <property type="gene ID" value="DDB_G0288219"/>
</dbReference>
<dbReference type="GeneID" id="8626518"/>
<dbReference type="KEGG" id="ddi:DDB_G0288219"/>
<dbReference type="dictyBase" id="DDB_G0288219"/>
<dbReference type="VEuPathDB" id="AmoebaDB:DDB_G0288219"/>
<dbReference type="eggNOG" id="ENOG502SN3T">
    <property type="taxonomic scope" value="Eukaryota"/>
</dbReference>
<dbReference type="HOGENOM" id="CLU_451780_0_0_1"/>
<dbReference type="InParanoid" id="Q54J86"/>
<dbReference type="OMA" id="YSYTGIF"/>
<dbReference type="PhylomeDB" id="Q54J86"/>
<dbReference type="PRO" id="PR:Q54J86"/>
<dbReference type="Proteomes" id="UP000002195">
    <property type="component" value="Chromosome 5"/>
</dbReference>
<dbReference type="GO" id="GO:0005576">
    <property type="term" value="C:extracellular region"/>
    <property type="evidence" value="ECO:0007669"/>
    <property type="project" value="UniProtKB-SubCell"/>
</dbReference>
<dbReference type="GO" id="GO:0046872">
    <property type="term" value="F:metal ion binding"/>
    <property type="evidence" value="ECO:0007669"/>
    <property type="project" value="UniProtKB-KW"/>
</dbReference>
<dbReference type="GO" id="GO:0004222">
    <property type="term" value="F:metalloendopeptidase activity"/>
    <property type="evidence" value="ECO:0007669"/>
    <property type="project" value="InterPro"/>
</dbReference>
<dbReference type="GO" id="GO:0006508">
    <property type="term" value="P:proteolysis"/>
    <property type="evidence" value="ECO:0007669"/>
    <property type="project" value="UniProtKB-KW"/>
</dbReference>
<dbReference type="InterPro" id="IPR051256">
    <property type="entry name" value="Dictomallein"/>
</dbReference>
<dbReference type="InterPro" id="IPR019503">
    <property type="entry name" value="Peptidase_M66_dom"/>
</dbReference>
<dbReference type="PANTHER" id="PTHR39540">
    <property type="match status" value="1"/>
</dbReference>
<dbReference type="PANTHER" id="PTHR39540:SF1">
    <property type="entry name" value="DICTOMALLEIN-1-RELATED"/>
    <property type="match status" value="1"/>
</dbReference>
<dbReference type="Pfam" id="PF10462">
    <property type="entry name" value="Peptidase_M66"/>
    <property type="match status" value="1"/>
</dbReference>
<dbReference type="PROSITE" id="PS51694">
    <property type="entry name" value="PEPTIDASE_M66"/>
    <property type="match status" value="1"/>
</dbReference>
<organism>
    <name type="scientific">Dictyostelium discoideum</name>
    <name type="common">Social amoeba</name>
    <dbReference type="NCBI Taxonomy" id="44689"/>
    <lineage>
        <taxon>Eukaryota</taxon>
        <taxon>Amoebozoa</taxon>
        <taxon>Evosea</taxon>
        <taxon>Eumycetozoa</taxon>
        <taxon>Dictyostelia</taxon>
        <taxon>Dictyosteliales</taxon>
        <taxon>Dictyosteliaceae</taxon>
        <taxon>Dictyostelium</taxon>
    </lineage>
</organism>
<gene>
    <name type="primary">dtmlA</name>
    <name type="ORF">DDB_G0288219</name>
</gene>
<protein>
    <recommendedName>
        <fullName>Dictomallein-1</fullName>
        <ecNumber>3.4.24.-</ecNumber>
    </recommendedName>
</protein>
<name>DTML1_DICDI</name>
<proteinExistence type="inferred from homology"/>
<feature type="signal peptide" evidence="2">
    <location>
        <begin position="1"/>
        <end position="19"/>
    </location>
</feature>
<feature type="chain" id="PRO_0000322646" description="Dictomallein-1">
    <location>
        <begin position="20"/>
        <end position="592"/>
    </location>
</feature>
<feature type="domain" description="Peptidase M66">
    <location>
        <begin position="140"/>
        <end position="402"/>
    </location>
</feature>
<feature type="active site" evidence="1">
    <location>
        <position position="295"/>
    </location>
</feature>
<feature type="binding site" evidence="1">
    <location>
        <position position="294"/>
    </location>
    <ligand>
        <name>Zn(2+)</name>
        <dbReference type="ChEBI" id="CHEBI:29105"/>
        <note>catalytic</note>
    </ligand>
</feature>
<feature type="binding site" evidence="1">
    <location>
        <position position="298"/>
    </location>
    <ligand>
        <name>Zn(2+)</name>
        <dbReference type="ChEBI" id="CHEBI:29105"/>
        <note>catalytic</note>
    </ligand>
</feature>
<feature type="binding site" evidence="1">
    <location>
        <position position="304"/>
    </location>
    <ligand>
        <name>Zn(2+)</name>
        <dbReference type="ChEBI" id="CHEBI:29105"/>
        <note>catalytic</note>
    </ligand>
</feature>
<sequence length="592" mass="65793">MKILIILLVFLNLITNINCAVCSSRLQVSDIKFANTHVLPIEGKSWKNNTVTLKILPNRESLLLAKFQDQTLSYTVKVWVDDSLMGKLTLNDPSKLPPTESNGTKYSTVHHSIRIPKDWMKPKMKIQFSTMLLKSEFFFPNIGHETNLNMWLLPFYLFGANDTNTQPLSVTGSISKDVSDELIQKWSLSSLNALNHPISRIDWSYLILPAGRNNLPGLRITNSDQKRDGYEIMSVVLGILSGIRGANGEGPSSVLYYAPLIHLGANGKYADPWGGLGGGSVGTGDYSYTGIFIHEAGHSYGLPHAGDSYKSGNYPYVDGSLLGSEWGFDMNHNEFLSVNIPSNIGAYKNCNKSFILDQNKNCVKQSVMQGGAGNQAQGYRYSMFADYEEVTIQNYFKDSIIYDKSFSTGYKKWNTTTLKYETYTPSTKSNGLYGINDGLPIERNVDVYTIIITHSFVGPANLSQIYPIFKSKGNLMPFFDPTNSTQLVDIRPNVSKYAWYCHANGCDYTIKITYTDGTTKYMLLQRGKRSWFSPSGAIGSGFTDPLSGESSLSVIFNIKADKTPSKIELFETLLGFNGFNSTTATLLVSQSF</sequence>
<comment type="cofactor">
    <cofactor evidence="3">
        <name>Zn(2+)</name>
        <dbReference type="ChEBI" id="CHEBI:29105"/>
    </cofactor>
    <text evidence="3">Binds 1 zinc ion per subunit.</text>
</comment>
<comment type="subcellular location">
    <subcellularLocation>
        <location evidence="3">Secreted</location>
    </subcellularLocation>
</comment>
<comment type="similarity">
    <text evidence="3">Belongs to the dictomallein family.</text>
</comment>
<keyword id="KW-0378">Hydrolase</keyword>
<keyword id="KW-0479">Metal-binding</keyword>
<keyword id="KW-0482">Metalloprotease</keyword>
<keyword id="KW-0645">Protease</keyword>
<keyword id="KW-1185">Reference proteome</keyword>
<keyword id="KW-0964">Secreted</keyword>
<keyword id="KW-0732">Signal</keyword>
<keyword id="KW-0862">Zinc</keyword>
<accession>Q54J86</accession>
<reference key="1">
    <citation type="journal article" date="2005" name="Nature">
        <title>The genome of the social amoeba Dictyostelium discoideum.</title>
        <authorList>
            <person name="Eichinger L."/>
            <person name="Pachebat J.A."/>
            <person name="Gloeckner G."/>
            <person name="Rajandream M.A."/>
            <person name="Sucgang R."/>
            <person name="Berriman M."/>
            <person name="Song J."/>
            <person name="Olsen R."/>
            <person name="Szafranski K."/>
            <person name="Xu Q."/>
            <person name="Tunggal B."/>
            <person name="Kummerfeld S."/>
            <person name="Madera M."/>
            <person name="Konfortov B.A."/>
            <person name="Rivero F."/>
            <person name="Bankier A.T."/>
            <person name="Lehmann R."/>
            <person name="Hamlin N."/>
            <person name="Davies R."/>
            <person name="Gaudet P."/>
            <person name="Fey P."/>
            <person name="Pilcher K."/>
            <person name="Chen G."/>
            <person name="Saunders D."/>
            <person name="Sodergren E.J."/>
            <person name="Davis P."/>
            <person name="Kerhornou A."/>
            <person name="Nie X."/>
            <person name="Hall N."/>
            <person name="Anjard C."/>
            <person name="Hemphill L."/>
            <person name="Bason N."/>
            <person name="Farbrother P."/>
            <person name="Desany B."/>
            <person name="Just E."/>
            <person name="Morio T."/>
            <person name="Rost R."/>
            <person name="Churcher C.M."/>
            <person name="Cooper J."/>
            <person name="Haydock S."/>
            <person name="van Driessche N."/>
            <person name="Cronin A."/>
            <person name="Goodhead I."/>
            <person name="Muzny D.M."/>
            <person name="Mourier T."/>
            <person name="Pain A."/>
            <person name="Lu M."/>
            <person name="Harper D."/>
            <person name="Lindsay R."/>
            <person name="Hauser H."/>
            <person name="James K.D."/>
            <person name="Quiles M."/>
            <person name="Madan Babu M."/>
            <person name="Saito T."/>
            <person name="Buchrieser C."/>
            <person name="Wardroper A."/>
            <person name="Felder M."/>
            <person name="Thangavelu M."/>
            <person name="Johnson D."/>
            <person name="Knights A."/>
            <person name="Loulseged H."/>
            <person name="Mungall K.L."/>
            <person name="Oliver K."/>
            <person name="Price C."/>
            <person name="Quail M.A."/>
            <person name="Urushihara H."/>
            <person name="Hernandez J."/>
            <person name="Rabbinowitsch E."/>
            <person name="Steffen D."/>
            <person name="Sanders M."/>
            <person name="Ma J."/>
            <person name="Kohara Y."/>
            <person name="Sharp S."/>
            <person name="Simmonds M.N."/>
            <person name="Spiegler S."/>
            <person name="Tivey A."/>
            <person name="Sugano S."/>
            <person name="White B."/>
            <person name="Walker D."/>
            <person name="Woodward J.R."/>
            <person name="Winckler T."/>
            <person name="Tanaka Y."/>
            <person name="Shaulsky G."/>
            <person name="Schleicher M."/>
            <person name="Weinstock G.M."/>
            <person name="Rosenthal A."/>
            <person name="Cox E.C."/>
            <person name="Chisholm R.L."/>
            <person name="Gibbs R.A."/>
            <person name="Loomis W.F."/>
            <person name="Platzer M."/>
            <person name="Kay R.R."/>
            <person name="Williams J.G."/>
            <person name="Dear P.H."/>
            <person name="Noegel A.A."/>
            <person name="Barrell B.G."/>
            <person name="Kuspa A."/>
        </authorList>
    </citation>
    <scope>NUCLEOTIDE SEQUENCE [LARGE SCALE GENOMIC DNA]</scope>
    <source>
        <strain>AX4</strain>
    </source>
</reference>
<evidence type="ECO:0000250" key="1"/>
<evidence type="ECO:0000255" key="2"/>
<evidence type="ECO:0000305" key="3"/>